<evidence type="ECO:0000250" key="1"/>
<evidence type="ECO:0000305" key="2"/>
<evidence type="ECO:0000312" key="3">
    <source>
        <dbReference type="MGI" id="MGI:3525017"/>
    </source>
</evidence>
<gene>
    <name evidence="3" type="primary">Igkv9-129</name>
</gene>
<dbReference type="EMBL" id="K00880">
    <property type="protein sequence ID" value="AAA39031.1"/>
    <property type="molecule type" value="Genomic_DNA"/>
</dbReference>
<dbReference type="PIR" id="A01924">
    <property type="entry name" value="KVMS3B"/>
</dbReference>
<dbReference type="SMR" id="P01641"/>
<dbReference type="FunCoup" id="P01641">
    <property type="interactions" value="547"/>
</dbReference>
<dbReference type="PeptideAtlas" id="P01641"/>
<dbReference type="Ensembl" id="ENSMUST00000200578.5">
    <property type="protein sequence ID" value="ENSMUSP00000142382.2"/>
    <property type="gene ID" value="ENSMUSG00000093906.7"/>
</dbReference>
<dbReference type="AGR" id="MGI:3525017"/>
<dbReference type="MGI" id="MGI:3525017">
    <property type="gene designation" value="Igkv9-129"/>
</dbReference>
<dbReference type="VEuPathDB" id="HostDB:ENSMUSG00000093906"/>
<dbReference type="GeneTree" id="ENSGT00940000153924"/>
<dbReference type="InParanoid" id="P01641"/>
<dbReference type="OMA" id="SAVAWYQ"/>
<dbReference type="OrthoDB" id="6103117at2759"/>
<dbReference type="PhylomeDB" id="P01641"/>
<dbReference type="Proteomes" id="UP000000589">
    <property type="component" value="Chromosome 6"/>
</dbReference>
<dbReference type="RNAct" id="P01641">
    <property type="molecule type" value="protein"/>
</dbReference>
<dbReference type="Bgee" id="ENSMUSG00000093906">
    <property type="expression patterns" value="Expressed in mesodermal cell in embryo and 19 other cell types or tissues"/>
</dbReference>
<dbReference type="ExpressionAtlas" id="P01641">
    <property type="expression patterns" value="baseline and differential"/>
</dbReference>
<dbReference type="GO" id="GO:0019814">
    <property type="term" value="C:immunoglobulin complex"/>
    <property type="evidence" value="ECO:0000318"/>
    <property type="project" value="GO_Central"/>
</dbReference>
<dbReference type="GO" id="GO:0002250">
    <property type="term" value="P:adaptive immune response"/>
    <property type="evidence" value="ECO:0007669"/>
    <property type="project" value="UniProtKB-KW"/>
</dbReference>
<dbReference type="GO" id="GO:0006955">
    <property type="term" value="P:immune response"/>
    <property type="evidence" value="ECO:0000318"/>
    <property type="project" value="GO_Central"/>
</dbReference>
<dbReference type="FunFam" id="2.60.40.10:FF:000212">
    <property type="entry name" value="Immunoglobulin kappa chain variable 12-38"/>
    <property type="match status" value="1"/>
</dbReference>
<dbReference type="Gene3D" id="2.60.40.10">
    <property type="entry name" value="Immunoglobulins"/>
    <property type="match status" value="1"/>
</dbReference>
<dbReference type="InterPro" id="IPR036179">
    <property type="entry name" value="Ig-like_dom_sf"/>
</dbReference>
<dbReference type="InterPro" id="IPR013783">
    <property type="entry name" value="Ig-like_fold"/>
</dbReference>
<dbReference type="InterPro" id="IPR013106">
    <property type="entry name" value="Ig_V-set"/>
</dbReference>
<dbReference type="InterPro" id="IPR050150">
    <property type="entry name" value="IgV_Light_Chain"/>
</dbReference>
<dbReference type="PANTHER" id="PTHR23267">
    <property type="entry name" value="IMMUNOGLOBULIN LIGHT CHAIN"/>
    <property type="match status" value="1"/>
</dbReference>
<dbReference type="Pfam" id="PF07686">
    <property type="entry name" value="V-set"/>
    <property type="match status" value="1"/>
</dbReference>
<dbReference type="SMART" id="SM00406">
    <property type="entry name" value="IGv"/>
    <property type="match status" value="1"/>
</dbReference>
<dbReference type="SUPFAM" id="SSF48726">
    <property type="entry name" value="Immunoglobulin"/>
    <property type="match status" value="1"/>
</dbReference>
<feature type="signal peptide">
    <location>
        <begin position="1"/>
        <end position="22"/>
    </location>
</feature>
<feature type="chain" id="PRO_0000015195" description="Immunoglobulin kappa variable 9-129">
    <location>
        <begin position="23"/>
        <end position="117"/>
    </location>
</feature>
<feature type="region of interest" description="Framework-1">
    <location>
        <begin position="23"/>
        <end position="45"/>
    </location>
</feature>
<feature type="region of interest" description="Complementarity-determining-1">
    <location>
        <begin position="46"/>
        <end position="56"/>
    </location>
</feature>
<feature type="region of interest" description="Framework-2">
    <location>
        <begin position="57"/>
        <end position="71"/>
    </location>
</feature>
<feature type="region of interest" description="Complementarity-determining-2">
    <location>
        <begin position="72"/>
        <end position="78"/>
    </location>
</feature>
<feature type="region of interest" description="Framework-3">
    <location>
        <begin position="79"/>
        <end position="110"/>
    </location>
</feature>
<feature type="region of interest" description="Complementarity-determining-3">
    <location>
        <begin position="111"/>
        <end position="117" status="greater than"/>
    </location>
</feature>
<feature type="disulfide bond" evidence="1">
    <location>
        <begin position="45"/>
        <end position="110"/>
    </location>
</feature>
<feature type="non-terminal residue">
    <location>
        <position position="117"/>
    </location>
</feature>
<protein>
    <recommendedName>
        <fullName evidence="3">Immunoglobulin kappa variable 9-129</fullName>
    </recommendedName>
    <alternativeName>
        <fullName evidence="2">Ig kappa chain V-V region MOPC 173B</fullName>
    </alternativeName>
</protein>
<accession>P01641</accession>
<name>KV5A8_MOUSE</name>
<keyword id="KW-1064">Adaptive immunity</keyword>
<keyword id="KW-1015">Disulfide bond</keyword>
<keyword id="KW-0391">Immunity</keyword>
<keyword id="KW-1280">Immunoglobulin</keyword>
<keyword id="KW-1185">Reference proteome</keyword>
<keyword id="KW-0732">Signal</keyword>
<organism>
    <name type="scientific">Mus musculus</name>
    <name type="common">Mouse</name>
    <dbReference type="NCBI Taxonomy" id="10090"/>
    <lineage>
        <taxon>Eukaryota</taxon>
        <taxon>Metazoa</taxon>
        <taxon>Chordata</taxon>
        <taxon>Craniata</taxon>
        <taxon>Vertebrata</taxon>
        <taxon>Euteleostomi</taxon>
        <taxon>Mammalia</taxon>
        <taxon>Eutheria</taxon>
        <taxon>Euarchontoglires</taxon>
        <taxon>Glires</taxon>
        <taxon>Rodentia</taxon>
        <taxon>Myomorpha</taxon>
        <taxon>Muroidea</taxon>
        <taxon>Muridae</taxon>
        <taxon>Murinae</taxon>
        <taxon>Mus</taxon>
        <taxon>Mus</taxon>
    </lineage>
</organism>
<reference key="1">
    <citation type="journal article" date="1980" name="Cell">
        <title>Variation in the crossover point of kappa immunoglobulin gene V-J recombination: evidence from a cryptic gene.</title>
        <authorList>
            <person name="Max E.E."/>
            <person name="Seidman J.G."/>
            <person name="Miller H."/>
            <person name="Leder P."/>
        </authorList>
    </citation>
    <scope>NUCLEOTIDE SEQUENCE [GENOMIC DNA]</scope>
</reference>
<proteinExistence type="predicted"/>
<sequence>MDMRAPAQVFGFLLLWFPGARCDIQMTQSPSSLSASLGERVSLTCRASQDIHGYLNLFQQKPGETIKHLIYETSNLDSGVPKRFSGSRSGSDYSLIIGSLESEDFADYYCLQYASSP</sequence>